<sequence length="280" mass="30863">MSINLQNVSYTYQAGTPFEGRALFNINLDILDGSYTAFIGHTGSGKSTIMQLLNGLHVPTTGIVSVDKQDITNHSKNKEIKSIRKHVGLVFQFPESQLFEETVLKDVAFGPQNFGVSPEEAEALAREKLALVGISENLFEKNPFELSGGQMRRVAIAGILAMQPKVLVLDEPTAGLDPKGRKELMTIFKKLHQSGMTIVLVTHLMDDVANYADFVYVLDKGKIILSGKPKTIFQQVSLLEKKQLGVPKVTKLAQRLVDRGIPISSLPITLEELREVLKHG</sequence>
<organism>
    <name type="scientific">Streptococcus pyogenes serotype M5 (strain Manfredo)</name>
    <dbReference type="NCBI Taxonomy" id="160491"/>
    <lineage>
        <taxon>Bacteria</taxon>
        <taxon>Bacillati</taxon>
        <taxon>Bacillota</taxon>
        <taxon>Bacilli</taxon>
        <taxon>Lactobacillales</taxon>
        <taxon>Streptococcaceae</taxon>
        <taxon>Streptococcus</taxon>
    </lineage>
</organism>
<reference key="1">
    <citation type="journal article" date="2007" name="J. Bacteriol.">
        <title>Complete genome of acute rheumatic fever-associated serotype M5 Streptococcus pyogenes strain Manfredo.</title>
        <authorList>
            <person name="Holden M.T.G."/>
            <person name="Scott A."/>
            <person name="Cherevach I."/>
            <person name="Chillingworth T."/>
            <person name="Churcher C."/>
            <person name="Cronin A."/>
            <person name="Dowd L."/>
            <person name="Feltwell T."/>
            <person name="Hamlin N."/>
            <person name="Holroyd S."/>
            <person name="Jagels K."/>
            <person name="Moule S."/>
            <person name="Mungall K."/>
            <person name="Quail M.A."/>
            <person name="Price C."/>
            <person name="Rabbinowitsch E."/>
            <person name="Sharp S."/>
            <person name="Skelton J."/>
            <person name="Whitehead S."/>
            <person name="Barrell B.G."/>
            <person name="Kehoe M."/>
            <person name="Parkhill J."/>
        </authorList>
    </citation>
    <scope>NUCLEOTIDE SEQUENCE [LARGE SCALE GENOMIC DNA]</scope>
    <source>
        <strain>Manfredo</strain>
    </source>
</reference>
<protein>
    <recommendedName>
        <fullName evidence="1">Energy-coupling factor transporter ATP-binding protein EcfA2</fullName>
        <shortName evidence="1">ECF transporter A component EcfA2</shortName>
        <ecNumber evidence="1">7.-.-.-</ecNumber>
    </recommendedName>
</protein>
<keyword id="KW-0067">ATP-binding</keyword>
<keyword id="KW-1003">Cell membrane</keyword>
<keyword id="KW-0472">Membrane</keyword>
<keyword id="KW-0547">Nucleotide-binding</keyword>
<keyword id="KW-1278">Translocase</keyword>
<keyword id="KW-0813">Transport</keyword>
<evidence type="ECO:0000255" key="1">
    <source>
        <dbReference type="HAMAP-Rule" id="MF_01710"/>
    </source>
</evidence>
<proteinExistence type="inferred from homology"/>
<gene>
    <name evidence="1" type="primary">ecfA2</name>
    <name type="synonym">cbiO2</name>
    <name type="ordered locus">SpyM51817</name>
</gene>
<accession>A2RH10</accession>
<name>ECFA2_STRPG</name>
<dbReference type="EC" id="7.-.-.-" evidence="1"/>
<dbReference type="EMBL" id="AM295007">
    <property type="protein sequence ID" value="CAM31142.1"/>
    <property type="molecule type" value="Genomic_DNA"/>
</dbReference>
<dbReference type="RefSeq" id="WP_002982066.1">
    <property type="nucleotide sequence ID" value="NC_009332.1"/>
</dbReference>
<dbReference type="SMR" id="A2RH10"/>
<dbReference type="KEGG" id="spf:SpyM51817"/>
<dbReference type="HOGENOM" id="CLU_000604_1_22_9"/>
<dbReference type="GO" id="GO:0043190">
    <property type="term" value="C:ATP-binding cassette (ABC) transporter complex"/>
    <property type="evidence" value="ECO:0007669"/>
    <property type="project" value="TreeGrafter"/>
</dbReference>
<dbReference type="GO" id="GO:0005524">
    <property type="term" value="F:ATP binding"/>
    <property type="evidence" value="ECO:0007669"/>
    <property type="project" value="UniProtKB-KW"/>
</dbReference>
<dbReference type="GO" id="GO:0016887">
    <property type="term" value="F:ATP hydrolysis activity"/>
    <property type="evidence" value="ECO:0007669"/>
    <property type="project" value="InterPro"/>
</dbReference>
<dbReference type="GO" id="GO:0042626">
    <property type="term" value="F:ATPase-coupled transmembrane transporter activity"/>
    <property type="evidence" value="ECO:0007669"/>
    <property type="project" value="TreeGrafter"/>
</dbReference>
<dbReference type="CDD" id="cd03225">
    <property type="entry name" value="ABC_cobalt_CbiO_domain1"/>
    <property type="match status" value="1"/>
</dbReference>
<dbReference type="FunFam" id="3.40.50.300:FF:000224">
    <property type="entry name" value="Energy-coupling factor transporter ATP-binding protein EcfA"/>
    <property type="match status" value="1"/>
</dbReference>
<dbReference type="Gene3D" id="3.40.50.300">
    <property type="entry name" value="P-loop containing nucleotide triphosphate hydrolases"/>
    <property type="match status" value="1"/>
</dbReference>
<dbReference type="InterPro" id="IPR003593">
    <property type="entry name" value="AAA+_ATPase"/>
</dbReference>
<dbReference type="InterPro" id="IPR003439">
    <property type="entry name" value="ABC_transporter-like_ATP-bd"/>
</dbReference>
<dbReference type="InterPro" id="IPR017871">
    <property type="entry name" value="ABC_transporter-like_CS"/>
</dbReference>
<dbReference type="InterPro" id="IPR015856">
    <property type="entry name" value="ABC_transpr_CbiO/EcfA_su"/>
</dbReference>
<dbReference type="InterPro" id="IPR050095">
    <property type="entry name" value="ECF_ABC_transporter_ATP-bd"/>
</dbReference>
<dbReference type="InterPro" id="IPR030946">
    <property type="entry name" value="EcfA2"/>
</dbReference>
<dbReference type="InterPro" id="IPR027417">
    <property type="entry name" value="P-loop_NTPase"/>
</dbReference>
<dbReference type="NCBIfam" id="TIGR04521">
    <property type="entry name" value="ECF_ATPase_2"/>
    <property type="match status" value="1"/>
</dbReference>
<dbReference type="PANTHER" id="PTHR43553:SF27">
    <property type="entry name" value="ENERGY-COUPLING FACTOR TRANSPORTER ATP-BINDING PROTEIN ECFA2"/>
    <property type="match status" value="1"/>
</dbReference>
<dbReference type="PANTHER" id="PTHR43553">
    <property type="entry name" value="HEAVY METAL TRANSPORTER"/>
    <property type="match status" value="1"/>
</dbReference>
<dbReference type="Pfam" id="PF00005">
    <property type="entry name" value="ABC_tran"/>
    <property type="match status" value="1"/>
</dbReference>
<dbReference type="SMART" id="SM00382">
    <property type="entry name" value="AAA"/>
    <property type="match status" value="1"/>
</dbReference>
<dbReference type="SUPFAM" id="SSF52540">
    <property type="entry name" value="P-loop containing nucleoside triphosphate hydrolases"/>
    <property type="match status" value="1"/>
</dbReference>
<dbReference type="PROSITE" id="PS00211">
    <property type="entry name" value="ABC_TRANSPORTER_1"/>
    <property type="match status" value="1"/>
</dbReference>
<dbReference type="PROSITE" id="PS50893">
    <property type="entry name" value="ABC_TRANSPORTER_2"/>
    <property type="match status" value="1"/>
</dbReference>
<dbReference type="PROSITE" id="PS51246">
    <property type="entry name" value="CBIO"/>
    <property type="match status" value="1"/>
</dbReference>
<feature type="chain" id="PRO_0000288005" description="Energy-coupling factor transporter ATP-binding protein EcfA2">
    <location>
        <begin position="1"/>
        <end position="280"/>
    </location>
</feature>
<feature type="domain" description="ABC transporter" evidence="1">
    <location>
        <begin position="3"/>
        <end position="245"/>
    </location>
</feature>
<feature type="binding site" evidence="1">
    <location>
        <begin position="40"/>
        <end position="47"/>
    </location>
    <ligand>
        <name>ATP</name>
        <dbReference type="ChEBI" id="CHEBI:30616"/>
    </ligand>
</feature>
<comment type="function">
    <text evidence="1">ATP-binding (A) component of a common energy-coupling factor (ECF) ABC-transporter complex. Unlike classic ABC transporters this ECF transporter provides the energy necessary to transport a number of different substrates.</text>
</comment>
<comment type="subunit">
    <text evidence="1">Forms a stable energy-coupling factor (ECF) transporter complex composed of 2 membrane-embedded substrate-binding proteins (S component), 2 ATP-binding proteins (A component) and 2 transmembrane proteins (T component).</text>
</comment>
<comment type="subcellular location">
    <subcellularLocation>
        <location evidence="1">Cell membrane</location>
        <topology evidence="1">Peripheral membrane protein</topology>
    </subcellularLocation>
</comment>
<comment type="similarity">
    <text evidence="1">Belongs to the ABC transporter superfamily. Energy-coupling factor EcfA family.</text>
</comment>